<protein>
    <recommendedName>
        <fullName>ATP-dependent RNA helicase DBP8</fullName>
        <ecNumber>3.6.4.13</ecNumber>
    </recommendedName>
</protein>
<proteinExistence type="inferred from homology"/>
<sequence length="442" mass="49147">MSFTDLGLPEWLNESLSNMAITKPSAIQKACIPQIMKGKDCIGGARTGSGKTIAFAAPMLAEWSKDPCGIFGLVLTPTRELAIQIAEQFTALGANMNIRVALIYGGVDMVKQSLELQKMPHFVIATPGRLADHIRSSGEDTIRGFRRVRYVVMDEADRLLTPGFVPDLKTCMDLLPDPSKRQTLLFTATVTDAVRALKDRTGEKGPPFIHEIASDIAVPSTLTQSYLFLPGYVREAYLWAILTHPDNEKKSAIIFVNRTQTAETLRRMLMALDVKTASLHSEMRQQERVNALGRFRAQAARVLVATDVASRGLDIPTVEMVINFDLPADADDYIHRVGRTARAGRKGQSVSLVTERDVTRVTNIEERVGTKMEKYDLIEDDKVVEEYLTPASTAKRQAVLDMEAENFGERKRIQRKKAGLDVDMKSKNKKPKRVAKGKSDKK</sequence>
<name>DBP8_YARLI</name>
<gene>
    <name type="primary">DBP8</name>
    <name type="ordered locus">YALI0E02552g</name>
</gene>
<reference key="1">
    <citation type="journal article" date="2004" name="Nature">
        <title>Genome evolution in yeasts.</title>
        <authorList>
            <person name="Dujon B."/>
            <person name="Sherman D."/>
            <person name="Fischer G."/>
            <person name="Durrens P."/>
            <person name="Casaregola S."/>
            <person name="Lafontaine I."/>
            <person name="de Montigny J."/>
            <person name="Marck C."/>
            <person name="Neuveglise C."/>
            <person name="Talla E."/>
            <person name="Goffard N."/>
            <person name="Frangeul L."/>
            <person name="Aigle M."/>
            <person name="Anthouard V."/>
            <person name="Babour A."/>
            <person name="Barbe V."/>
            <person name="Barnay S."/>
            <person name="Blanchin S."/>
            <person name="Beckerich J.-M."/>
            <person name="Beyne E."/>
            <person name="Bleykasten C."/>
            <person name="Boisrame A."/>
            <person name="Boyer J."/>
            <person name="Cattolico L."/>
            <person name="Confanioleri F."/>
            <person name="de Daruvar A."/>
            <person name="Despons L."/>
            <person name="Fabre E."/>
            <person name="Fairhead C."/>
            <person name="Ferry-Dumazet H."/>
            <person name="Groppi A."/>
            <person name="Hantraye F."/>
            <person name="Hennequin C."/>
            <person name="Jauniaux N."/>
            <person name="Joyet P."/>
            <person name="Kachouri R."/>
            <person name="Kerrest A."/>
            <person name="Koszul R."/>
            <person name="Lemaire M."/>
            <person name="Lesur I."/>
            <person name="Ma L."/>
            <person name="Muller H."/>
            <person name="Nicaud J.-M."/>
            <person name="Nikolski M."/>
            <person name="Oztas S."/>
            <person name="Ozier-Kalogeropoulos O."/>
            <person name="Pellenz S."/>
            <person name="Potier S."/>
            <person name="Richard G.-F."/>
            <person name="Straub M.-L."/>
            <person name="Suleau A."/>
            <person name="Swennen D."/>
            <person name="Tekaia F."/>
            <person name="Wesolowski-Louvel M."/>
            <person name="Westhof E."/>
            <person name="Wirth B."/>
            <person name="Zeniou-Meyer M."/>
            <person name="Zivanovic Y."/>
            <person name="Bolotin-Fukuhara M."/>
            <person name="Thierry A."/>
            <person name="Bouchier C."/>
            <person name="Caudron B."/>
            <person name="Scarpelli C."/>
            <person name="Gaillardin C."/>
            <person name="Weissenbach J."/>
            <person name="Wincker P."/>
            <person name="Souciet J.-L."/>
        </authorList>
    </citation>
    <scope>NUCLEOTIDE SEQUENCE [LARGE SCALE GENOMIC DNA]</scope>
    <source>
        <strain>CLIB 122 / E 150</strain>
    </source>
</reference>
<comment type="function">
    <text evidence="1">ATP-binding RNA helicase involved in 40S ribosomal subunit biogenesis and is required for the normal formation of 18S rRNAs through pre-rRNA processing at A0, A1 and A2 sites. Required for vegetative growth (By similarity).</text>
</comment>
<comment type="catalytic activity">
    <reaction>
        <text>ATP + H2O = ADP + phosphate + H(+)</text>
        <dbReference type="Rhea" id="RHEA:13065"/>
        <dbReference type="ChEBI" id="CHEBI:15377"/>
        <dbReference type="ChEBI" id="CHEBI:15378"/>
        <dbReference type="ChEBI" id="CHEBI:30616"/>
        <dbReference type="ChEBI" id="CHEBI:43474"/>
        <dbReference type="ChEBI" id="CHEBI:456216"/>
        <dbReference type="EC" id="3.6.4.13"/>
    </reaction>
</comment>
<comment type="subcellular location">
    <subcellularLocation>
        <location evidence="1">Nucleus</location>
        <location evidence="1">Nucleolus</location>
    </subcellularLocation>
</comment>
<comment type="domain">
    <text>The Q motif is unique to and characteristic of the DEAD box family of RNA helicases and controls ATP binding and hydrolysis.</text>
</comment>
<comment type="similarity">
    <text evidence="5">Belongs to the DEAD box helicase family. DDX49/DBP8 subfamily.</text>
</comment>
<dbReference type="EC" id="3.6.4.13"/>
<dbReference type="EMBL" id="CR382131">
    <property type="protein sequence ID" value="CAG79042.1"/>
    <property type="molecule type" value="Genomic_DNA"/>
</dbReference>
<dbReference type="RefSeq" id="XP_503463.1">
    <property type="nucleotide sequence ID" value="XM_503463.1"/>
</dbReference>
<dbReference type="SMR" id="Q6C799"/>
<dbReference type="FunCoup" id="Q6C799">
    <property type="interactions" value="883"/>
</dbReference>
<dbReference type="STRING" id="284591.Q6C799"/>
<dbReference type="EnsemblFungi" id="CAG79042">
    <property type="protein sequence ID" value="CAG79042"/>
    <property type="gene ID" value="YALI0_E02552g"/>
</dbReference>
<dbReference type="KEGG" id="yli:2912109"/>
<dbReference type="VEuPathDB" id="FungiDB:YALI0_E02552g"/>
<dbReference type="HOGENOM" id="CLU_003041_1_1_1"/>
<dbReference type="InParanoid" id="Q6C799"/>
<dbReference type="OMA" id="IMIFTDT"/>
<dbReference type="OrthoDB" id="112991at4891"/>
<dbReference type="Proteomes" id="UP000001300">
    <property type="component" value="Chromosome E"/>
</dbReference>
<dbReference type="GO" id="GO:0005730">
    <property type="term" value="C:nucleolus"/>
    <property type="evidence" value="ECO:0007669"/>
    <property type="project" value="UniProtKB-SubCell"/>
</dbReference>
<dbReference type="GO" id="GO:0005634">
    <property type="term" value="C:nucleus"/>
    <property type="evidence" value="ECO:0000318"/>
    <property type="project" value="GO_Central"/>
</dbReference>
<dbReference type="GO" id="GO:0005524">
    <property type="term" value="F:ATP binding"/>
    <property type="evidence" value="ECO:0007669"/>
    <property type="project" value="UniProtKB-KW"/>
</dbReference>
<dbReference type="GO" id="GO:0016887">
    <property type="term" value="F:ATP hydrolysis activity"/>
    <property type="evidence" value="ECO:0007669"/>
    <property type="project" value="RHEA"/>
</dbReference>
<dbReference type="GO" id="GO:0003723">
    <property type="term" value="F:RNA binding"/>
    <property type="evidence" value="ECO:0007669"/>
    <property type="project" value="UniProtKB-KW"/>
</dbReference>
<dbReference type="GO" id="GO:0003724">
    <property type="term" value="F:RNA helicase activity"/>
    <property type="evidence" value="ECO:0007669"/>
    <property type="project" value="UniProtKB-EC"/>
</dbReference>
<dbReference type="GO" id="GO:0006364">
    <property type="term" value="P:rRNA processing"/>
    <property type="evidence" value="ECO:0000318"/>
    <property type="project" value="GO_Central"/>
</dbReference>
<dbReference type="CDD" id="cd17955">
    <property type="entry name" value="DEADc_DDX49"/>
    <property type="match status" value="1"/>
</dbReference>
<dbReference type="CDD" id="cd18787">
    <property type="entry name" value="SF2_C_DEAD"/>
    <property type="match status" value="1"/>
</dbReference>
<dbReference type="Gene3D" id="3.40.50.300">
    <property type="entry name" value="P-loop containing nucleotide triphosphate hydrolases"/>
    <property type="match status" value="2"/>
</dbReference>
<dbReference type="InterPro" id="IPR011545">
    <property type="entry name" value="DEAD/DEAH_box_helicase_dom"/>
</dbReference>
<dbReference type="InterPro" id="IPR050079">
    <property type="entry name" value="DEAD_box_RNA_helicase"/>
</dbReference>
<dbReference type="InterPro" id="IPR014001">
    <property type="entry name" value="Helicase_ATP-bd"/>
</dbReference>
<dbReference type="InterPro" id="IPR001650">
    <property type="entry name" value="Helicase_C-like"/>
</dbReference>
<dbReference type="InterPro" id="IPR027417">
    <property type="entry name" value="P-loop_NTPase"/>
</dbReference>
<dbReference type="InterPro" id="IPR000629">
    <property type="entry name" value="RNA-helicase_DEAD-box_CS"/>
</dbReference>
<dbReference type="InterPro" id="IPR014014">
    <property type="entry name" value="RNA_helicase_DEAD_Q_motif"/>
</dbReference>
<dbReference type="PANTHER" id="PTHR47959:SF24">
    <property type="entry name" value="ATP-DEPENDENT RNA HELICASE"/>
    <property type="match status" value="1"/>
</dbReference>
<dbReference type="PANTHER" id="PTHR47959">
    <property type="entry name" value="ATP-DEPENDENT RNA HELICASE RHLE-RELATED"/>
    <property type="match status" value="1"/>
</dbReference>
<dbReference type="Pfam" id="PF00270">
    <property type="entry name" value="DEAD"/>
    <property type="match status" value="1"/>
</dbReference>
<dbReference type="Pfam" id="PF00271">
    <property type="entry name" value="Helicase_C"/>
    <property type="match status" value="1"/>
</dbReference>
<dbReference type="SMART" id="SM00487">
    <property type="entry name" value="DEXDc"/>
    <property type="match status" value="1"/>
</dbReference>
<dbReference type="SMART" id="SM00490">
    <property type="entry name" value="HELICc"/>
    <property type="match status" value="1"/>
</dbReference>
<dbReference type="SUPFAM" id="SSF52540">
    <property type="entry name" value="P-loop containing nucleoside triphosphate hydrolases"/>
    <property type="match status" value="1"/>
</dbReference>
<dbReference type="PROSITE" id="PS00039">
    <property type="entry name" value="DEAD_ATP_HELICASE"/>
    <property type="match status" value="1"/>
</dbReference>
<dbReference type="PROSITE" id="PS51192">
    <property type="entry name" value="HELICASE_ATP_BIND_1"/>
    <property type="match status" value="1"/>
</dbReference>
<dbReference type="PROSITE" id="PS51194">
    <property type="entry name" value="HELICASE_CTER"/>
    <property type="match status" value="1"/>
</dbReference>
<dbReference type="PROSITE" id="PS51195">
    <property type="entry name" value="Q_MOTIF"/>
    <property type="match status" value="1"/>
</dbReference>
<organism>
    <name type="scientific">Yarrowia lipolytica (strain CLIB 122 / E 150)</name>
    <name type="common">Yeast</name>
    <name type="synonym">Candida lipolytica</name>
    <dbReference type="NCBI Taxonomy" id="284591"/>
    <lineage>
        <taxon>Eukaryota</taxon>
        <taxon>Fungi</taxon>
        <taxon>Dikarya</taxon>
        <taxon>Ascomycota</taxon>
        <taxon>Saccharomycotina</taxon>
        <taxon>Dipodascomycetes</taxon>
        <taxon>Dipodascales</taxon>
        <taxon>Dipodascales incertae sedis</taxon>
        <taxon>Yarrowia</taxon>
    </lineage>
</organism>
<evidence type="ECO:0000250" key="1"/>
<evidence type="ECO:0000255" key="2">
    <source>
        <dbReference type="PROSITE-ProRule" id="PRU00541"/>
    </source>
</evidence>
<evidence type="ECO:0000255" key="3">
    <source>
        <dbReference type="PROSITE-ProRule" id="PRU00542"/>
    </source>
</evidence>
<evidence type="ECO:0000256" key="4">
    <source>
        <dbReference type="SAM" id="MobiDB-lite"/>
    </source>
</evidence>
<evidence type="ECO:0000305" key="5"/>
<keyword id="KW-0067">ATP-binding</keyword>
<keyword id="KW-0347">Helicase</keyword>
<keyword id="KW-0378">Hydrolase</keyword>
<keyword id="KW-0547">Nucleotide-binding</keyword>
<keyword id="KW-0539">Nucleus</keyword>
<keyword id="KW-1185">Reference proteome</keyword>
<keyword id="KW-0690">Ribosome biogenesis</keyword>
<keyword id="KW-0694">RNA-binding</keyword>
<keyword id="KW-0698">rRNA processing</keyword>
<accession>Q6C799</accession>
<feature type="chain" id="PRO_0000232292" description="ATP-dependent RNA helicase DBP8">
    <location>
        <begin position="1"/>
        <end position="442"/>
    </location>
</feature>
<feature type="domain" description="Helicase ATP-binding" evidence="2">
    <location>
        <begin position="32"/>
        <end position="208"/>
    </location>
</feature>
<feature type="domain" description="Helicase C-terminal" evidence="3">
    <location>
        <begin position="237"/>
        <end position="383"/>
    </location>
</feature>
<feature type="region of interest" description="Disordered" evidence="4">
    <location>
        <begin position="411"/>
        <end position="442"/>
    </location>
</feature>
<feature type="short sequence motif" description="Q motif">
    <location>
        <begin position="1"/>
        <end position="29"/>
    </location>
</feature>
<feature type="short sequence motif" description="DEAD box">
    <location>
        <begin position="154"/>
        <end position="157"/>
    </location>
</feature>
<feature type="compositionally biased region" description="Basic residues" evidence="4">
    <location>
        <begin position="427"/>
        <end position="442"/>
    </location>
</feature>
<feature type="binding site" evidence="2">
    <location>
        <begin position="45"/>
        <end position="52"/>
    </location>
    <ligand>
        <name>ATP</name>
        <dbReference type="ChEBI" id="CHEBI:30616"/>
    </ligand>
</feature>